<organism>
    <name type="scientific">Cryptococcus neoformans var. neoformans serotype D (strain B-3501A)</name>
    <name type="common">Filobasidiella neoformans</name>
    <dbReference type="NCBI Taxonomy" id="283643"/>
    <lineage>
        <taxon>Eukaryota</taxon>
        <taxon>Fungi</taxon>
        <taxon>Dikarya</taxon>
        <taxon>Basidiomycota</taxon>
        <taxon>Agaricomycotina</taxon>
        <taxon>Tremellomycetes</taxon>
        <taxon>Tremellales</taxon>
        <taxon>Cryptococcaceae</taxon>
        <taxon>Cryptococcus</taxon>
        <taxon>Cryptococcus neoformans species complex</taxon>
    </lineage>
</organism>
<reference key="1">
    <citation type="journal article" date="2005" name="Science">
        <title>The genome of the basidiomycetous yeast and human pathogen Cryptococcus neoformans.</title>
        <authorList>
            <person name="Loftus B.J."/>
            <person name="Fung E."/>
            <person name="Roncaglia P."/>
            <person name="Rowley D."/>
            <person name="Amedeo P."/>
            <person name="Bruno D."/>
            <person name="Vamathevan J."/>
            <person name="Miranda M."/>
            <person name="Anderson I.J."/>
            <person name="Fraser J.A."/>
            <person name="Allen J.E."/>
            <person name="Bosdet I.E."/>
            <person name="Brent M.R."/>
            <person name="Chiu R."/>
            <person name="Doering T.L."/>
            <person name="Donlin M.J."/>
            <person name="D'Souza C.A."/>
            <person name="Fox D.S."/>
            <person name="Grinberg V."/>
            <person name="Fu J."/>
            <person name="Fukushima M."/>
            <person name="Haas B.J."/>
            <person name="Huang J.C."/>
            <person name="Janbon G."/>
            <person name="Jones S.J.M."/>
            <person name="Koo H.L."/>
            <person name="Krzywinski M.I."/>
            <person name="Kwon-Chung K.J."/>
            <person name="Lengeler K.B."/>
            <person name="Maiti R."/>
            <person name="Marra M.A."/>
            <person name="Marra R.E."/>
            <person name="Mathewson C.A."/>
            <person name="Mitchell T.G."/>
            <person name="Pertea M."/>
            <person name="Riggs F.R."/>
            <person name="Salzberg S.L."/>
            <person name="Schein J.E."/>
            <person name="Shvartsbeyn A."/>
            <person name="Shin H."/>
            <person name="Shumway M."/>
            <person name="Specht C.A."/>
            <person name="Suh B.B."/>
            <person name="Tenney A."/>
            <person name="Utterback T.R."/>
            <person name="Wickes B.L."/>
            <person name="Wortman J.R."/>
            <person name="Wye N.H."/>
            <person name="Kronstad J.W."/>
            <person name="Lodge J.K."/>
            <person name="Heitman J."/>
            <person name="Davis R.W."/>
            <person name="Fraser C.M."/>
            <person name="Hyman R.W."/>
        </authorList>
    </citation>
    <scope>NUCLEOTIDE SEQUENCE [LARGE SCALE GENOMIC DNA]</scope>
    <source>
        <strain>B-3501A</strain>
    </source>
</reference>
<name>COQ4_CRYNB</name>
<accession>P0CM83</accession>
<accession>Q55KD8</accession>
<accession>Q5K969</accession>
<gene>
    <name evidence="1" type="primary">COQ4</name>
    <name type="ordered locus">CNBK0480</name>
</gene>
<dbReference type="EC" id="4.1.1.130" evidence="1"/>
<dbReference type="EMBL" id="AAEY01000052">
    <property type="protein sequence ID" value="EAL18027.1"/>
    <property type="molecule type" value="Genomic_DNA"/>
</dbReference>
<dbReference type="RefSeq" id="XP_772674.1">
    <property type="nucleotide sequence ID" value="XM_767581.1"/>
</dbReference>
<dbReference type="SMR" id="P0CM83"/>
<dbReference type="GeneID" id="4938744"/>
<dbReference type="KEGG" id="cnb:CNBK0480"/>
<dbReference type="VEuPathDB" id="FungiDB:CNBK0480"/>
<dbReference type="HOGENOM" id="CLU_061241_1_0_1"/>
<dbReference type="OrthoDB" id="3855at5206"/>
<dbReference type="UniPathway" id="UPA00232"/>
<dbReference type="GO" id="GO:0031314">
    <property type="term" value="C:extrinsic component of mitochondrial inner membrane"/>
    <property type="evidence" value="ECO:0007669"/>
    <property type="project" value="UniProtKB-UniRule"/>
</dbReference>
<dbReference type="GO" id="GO:0006744">
    <property type="term" value="P:ubiquinone biosynthetic process"/>
    <property type="evidence" value="ECO:0007669"/>
    <property type="project" value="UniProtKB-UniRule"/>
</dbReference>
<dbReference type="HAMAP" id="MF_03111">
    <property type="entry name" value="Coq4"/>
    <property type="match status" value="1"/>
</dbReference>
<dbReference type="InterPro" id="IPR007715">
    <property type="entry name" value="Coq4"/>
</dbReference>
<dbReference type="InterPro" id="IPR027540">
    <property type="entry name" value="Coq4_euk"/>
</dbReference>
<dbReference type="PANTHER" id="PTHR12922">
    <property type="entry name" value="UBIQUINONE BIOSYNTHESIS PROTEIN"/>
    <property type="match status" value="1"/>
</dbReference>
<dbReference type="PANTHER" id="PTHR12922:SF7">
    <property type="entry name" value="UBIQUINONE BIOSYNTHESIS PROTEIN COQ4 HOMOLOG, MITOCHONDRIAL"/>
    <property type="match status" value="1"/>
</dbReference>
<dbReference type="Pfam" id="PF05019">
    <property type="entry name" value="Coq4"/>
    <property type="match status" value="1"/>
</dbReference>
<proteinExistence type="inferred from homology"/>
<protein>
    <recommendedName>
        <fullName evidence="1">Ubiquinone biosynthesis protein COQ4, mitochondrial</fullName>
    </recommendedName>
    <alternativeName>
        <fullName>4-hydroxy-3-methoxy-5-polyprenylbenzoate decarboxylase</fullName>
        <ecNumber evidence="1">4.1.1.130</ecNumber>
    </alternativeName>
    <alternativeName>
        <fullName evidence="1">Coenzyme Q biosynthesis protein 4</fullName>
    </alternativeName>
</protein>
<evidence type="ECO:0000255" key="1">
    <source>
        <dbReference type="HAMAP-Rule" id="MF_03111"/>
    </source>
</evidence>
<keyword id="KW-0456">Lyase</keyword>
<keyword id="KW-0472">Membrane</keyword>
<keyword id="KW-0479">Metal-binding</keyword>
<keyword id="KW-0496">Mitochondrion</keyword>
<keyword id="KW-0999">Mitochondrion inner membrane</keyword>
<keyword id="KW-0831">Ubiquinone biosynthesis</keyword>
<keyword id="KW-0862">Zinc</keyword>
<comment type="function">
    <text evidence="1">Lyase that catalyzes the C1-decarboxylation of 4-hydroxy-3-methoxy-5-(all-trans-polyprenyl)benzoic acid into 2-methoxy-6-(all-trans-polyprenyl)phenol during ubiquinone biosynthesis.</text>
</comment>
<comment type="catalytic activity">
    <reaction evidence="1">
        <text>a 4-hydroxy-3-methoxy-5-(all-trans-polyprenyl)benzoate + H(+) = a 2-methoxy-6-(all-trans-polyprenyl)phenol + CO2</text>
        <dbReference type="Rhea" id="RHEA:81179"/>
        <dbReference type="Rhea" id="RHEA-COMP:9551"/>
        <dbReference type="Rhea" id="RHEA-COMP:10931"/>
        <dbReference type="ChEBI" id="CHEBI:15378"/>
        <dbReference type="ChEBI" id="CHEBI:16526"/>
        <dbReference type="ChEBI" id="CHEBI:62731"/>
        <dbReference type="ChEBI" id="CHEBI:84443"/>
        <dbReference type="EC" id="4.1.1.130"/>
    </reaction>
</comment>
<comment type="cofactor">
    <cofactor evidence="1">
        <name>Zn(2+)</name>
        <dbReference type="ChEBI" id="CHEBI:29105"/>
    </cofactor>
</comment>
<comment type="pathway">
    <text evidence="1">Cofactor biosynthesis; ubiquinone biosynthesis.</text>
</comment>
<comment type="subunit">
    <text evidence="1">Component of a multi-subunit COQ enzyme complex, composed of at least COQ3, COQ4, COQ5, COQ6, COQ7 and COQ9.</text>
</comment>
<comment type="subcellular location">
    <subcellularLocation>
        <location evidence="1">Mitochondrion inner membrane</location>
        <topology evidence="1">Peripheral membrane protein</topology>
        <orientation evidence="1">Matrix side</orientation>
    </subcellularLocation>
</comment>
<comment type="miscellaneous">
    <text evidence="1">This protein may be expected to contain an N-terminal transit peptide but none has been predicted.</text>
</comment>
<comment type="similarity">
    <text evidence="1">Belongs to the COQ4 family.</text>
</comment>
<sequence>MTLAIPLELSLFDPTSADFLVPLISFSAYFSVKSFTMRPCPRLLTRKLNYPGHIPLSPAQNALLAVGSGVVGVLDVTRGDLIASLSESTAGIFLPALHEKMKMTPEGRQIMKDRPEITNKTIEKLKELKRGTLGREYVEWLGGGGLEPESRAPVQYIDSPLLAYTMLRYRQTHDLYHTLFSLPPTLPHELSLKVLEFSNMSLPVALLSSVFGPLRLKRKETWTRDWVPWALRTGREGRSLVTVYWEKRWEQGIGELRRELGVERNDADGVEARWGGYRKIREVERELRRKGEWVDEPEDW</sequence>
<feature type="chain" id="PRO_0000410044" description="Ubiquinone biosynthesis protein COQ4, mitochondrial">
    <location>
        <begin position="1"/>
        <end position="300"/>
    </location>
</feature>
<feature type="binding site" evidence="1">
    <location>
        <position position="173"/>
    </location>
    <ligand>
        <name>Zn(2+)</name>
        <dbReference type="ChEBI" id="CHEBI:29105"/>
    </ligand>
</feature>
<feature type="binding site" evidence="1">
    <location>
        <position position="174"/>
    </location>
    <ligand>
        <name>Zn(2+)</name>
        <dbReference type="ChEBI" id="CHEBI:29105"/>
    </ligand>
</feature>
<feature type="binding site" evidence="1">
    <location>
        <position position="177"/>
    </location>
    <ligand>
        <name>Zn(2+)</name>
        <dbReference type="ChEBI" id="CHEBI:29105"/>
    </ligand>
</feature>
<feature type="binding site" evidence="1">
    <location>
        <position position="189"/>
    </location>
    <ligand>
        <name>Zn(2+)</name>
        <dbReference type="ChEBI" id="CHEBI:29105"/>
    </ligand>
</feature>